<comment type="function">
    <text evidence="1">Component of the integrator complex, a multiprotein complex that terminates RNA polymerase II (Pol II) transcription in the promoter-proximal region of genes. The integrator complex provides a quality checkpoint during transcription elongation by driving premature transcription termination of transcripts that are unfavorably configured for transcriptional elongation: the complex terminates transcription by (1) catalyzing dephosphorylation of the C-terminal domain (CTD) of Pol II subunit POLR2A/RPB1 and SUPT5H/SPT5, (2) degrading the exiting nascent RNA transcript via endonuclease activity and (3) promoting the release of Pol II from bound DNA. The integrator complex is also involved in terminating the synthesis of non-coding Pol II transcripts, such as enhancer RNAs (eRNAs), small nuclear RNAs (snRNAs), telomerase RNAs and long non-coding RNAs (lncRNAs). INTS15 is part of the integrator tail module that acts as a platform for the recruitment of transcription factors at promoters. Within the integrator complex, INTS15 is required to bridge different integrator modules.</text>
</comment>
<comment type="subunit">
    <text evidence="1">Component of the Integrator complex, composed of core subunits INTS1, INTS2, INTS3, INTS4, INTS5, INTS6, INTS7, INTS8, INTS9/RC74, INTS10, INTS11/CPSF3L, INTS12, INTS13, INTS14 and INTS15. The core complex associates with protein phosphatase 2A subunits PPP2CA and PPP2R1A, to form the Integrator-PP2A (INTAC) complex. INTS15 is part of the tail subcomplex, composed of INTS10, INTS13, INTS14 and INTS15.</text>
</comment>
<comment type="subcellular location">
    <subcellularLocation>
        <location evidence="1">Nucleus</location>
    </subcellularLocation>
    <subcellularLocation>
        <location evidence="1">Chromosome</location>
    </subcellularLocation>
    <text evidence="1">Associates to RNA polymerase II (Pol II) during active transcription.</text>
</comment>
<comment type="similarity">
    <text evidence="2">Belongs to the Integrator subunit 15 family.</text>
</comment>
<organism>
    <name type="scientific">Mus musculus</name>
    <name type="common">Mouse</name>
    <dbReference type="NCBI Taxonomy" id="10090"/>
    <lineage>
        <taxon>Eukaryota</taxon>
        <taxon>Metazoa</taxon>
        <taxon>Chordata</taxon>
        <taxon>Craniata</taxon>
        <taxon>Vertebrata</taxon>
        <taxon>Euteleostomi</taxon>
        <taxon>Mammalia</taxon>
        <taxon>Eutheria</taxon>
        <taxon>Euarchontoglires</taxon>
        <taxon>Glires</taxon>
        <taxon>Rodentia</taxon>
        <taxon>Myomorpha</taxon>
        <taxon>Muroidea</taxon>
        <taxon>Muridae</taxon>
        <taxon>Murinae</taxon>
        <taxon>Mus</taxon>
        <taxon>Mus</taxon>
    </lineage>
</organism>
<sequence>MSDIRHSLLRRDALSAAKEVLYHLDIYFSSQLQSAPLPIVDKGSVELLEEFVFQVPKERGAQPKRLNSLQELQLLEIMCSYFQEQSKDSVRQIIFSSLFSPQGNKADDSRMSLLGKLVSMAVAVCRIPVLECAASWLQRTPVVYCVRLARVLVEDYCCLVPGSVQTLKQIFSASPRFCCQFITSVTALYDLSSDDLIPPLDLLEMIVSWIFEDPRLILITFLNTPIAANLPIGFLELTPLIGLIRWCVKAPLAYKRKKPCLSNGHISHKVAKDSGASTDRDSHLLYSKLHLSVLQVLMTLQLHLTEKNLYGRLGLILFDHMVPLVEEINRLADELNPLNASQEIELALDRLAQALQVAMTSGALLCTRDDLRTLCSRLPHNNLLQLVISGPVQQSPHTALPPGFYPHIHTPPLAYGAVPAHPAAHPALPTHPGHTFISGVTFPFRPIR</sequence>
<name>INT15_MOUSE</name>
<reference key="1">
    <citation type="journal article" date="2005" name="Science">
        <title>The transcriptional landscape of the mammalian genome.</title>
        <authorList>
            <person name="Carninci P."/>
            <person name="Kasukawa T."/>
            <person name="Katayama S."/>
            <person name="Gough J."/>
            <person name="Frith M.C."/>
            <person name="Maeda N."/>
            <person name="Oyama R."/>
            <person name="Ravasi T."/>
            <person name="Lenhard B."/>
            <person name="Wells C."/>
            <person name="Kodzius R."/>
            <person name="Shimokawa K."/>
            <person name="Bajic V.B."/>
            <person name="Brenner S.E."/>
            <person name="Batalov S."/>
            <person name="Forrest A.R."/>
            <person name="Zavolan M."/>
            <person name="Davis M.J."/>
            <person name="Wilming L.G."/>
            <person name="Aidinis V."/>
            <person name="Allen J.E."/>
            <person name="Ambesi-Impiombato A."/>
            <person name="Apweiler R."/>
            <person name="Aturaliya R.N."/>
            <person name="Bailey T.L."/>
            <person name="Bansal M."/>
            <person name="Baxter L."/>
            <person name="Beisel K.W."/>
            <person name="Bersano T."/>
            <person name="Bono H."/>
            <person name="Chalk A.M."/>
            <person name="Chiu K.P."/>
            <person name="Choudhary V."/>
            <person name="Christoffels A."/>
            <person name="Clutterbuck D.R."/>
            <person name="Crowe M.L."/>
            <person name="Dalla E."/>
            <person name="Dalrymple B.P."/>
            <person name="de Bono B."/>
            <person name="Della Gatta G."/>
            <person name="di Bernardo D."/>
            <person name="Down T."/>
            <person name="Engstrom P."/>
            <person name="Fagiolini M."/>
            <person name="Faulkner G."/>
            <person name="Fletcher C.F."/>
            <person name="Fukushima T."/>
            <person name="Furuno M."/>
            <person name="Futaki S."/>
            <person name="Gariboldi M."/>
            <person name="Georgii-Hemming P."/>
            <person name="Gingeras T.R."/>
            <person name="Gojobori T."/>
            <person name="Green R.E."/>
            <person name="Gustincich S."/>
            <person name="Harbers M."/>
            <person name="Hayashi Y."/>
            <person name="Hensch T.K."/>
            <person name="Hirokawa N."/>
            <person name="Hill D."/>
            <person name="Huminiecki L."/>
            <person name="Iacono M."/>
            <person name="Ikeo K."/>
            <person name="Iwama A."/>
            <person name="Ishikawa T."/>
            <person name="Jakt M."/>
            <person name="Kanapin A."/>
            <person name="Katoh M."/>
            <person name="Kawasawa Y."/>
            <person name="Kelso J."/>
            <person name="Kitamura H."/>
            <person name="Kitano H."/>
            <person name="Kollias G."/>
            <person name="Krishnan S.P."/>
            <person name="Kruger A."/>
            <person name="Kummerfeld S.K."/>
            <person name="Kurochkin I.V."/>
            <person name="Lareau L.F."/>
            <person name="Lazarevic D."/>
            <person name="Lipovich L."/>
            <person name="Liu J."/>
            <person name="Liuni S."/>
            <person name="McWilliam S."/>
            <person name="Madan Babu M."/>
            <person name="Madera M."/>
            <person name="Marchionni L."/>
            <person name="Matsuda H."/>
            <person name="Matsuzawa S."/>
            <person name="Miki H."/>
            <person name="Mignone F."/>
            <person name="Miyake S."/>
            <person name="Morris K."/>
            <person name="Mottagui-Tabar S."/>
            <person name="Mulder N."/>
            <person name="Nakano N."/>
            <person name="Nakauchi H."/>
            <person name="Ng P."/>
            <person name="Nilsson R."/>
            <person name="Nishiguchi S."/>
            <person name="Nishikawa S."/>
            <person name="Nori F."/>
            <person name="Ohara O."/>
            <person name="Okazaki Y."/>
            <person name="Orlando V."/>
            <person name="Pang K.C."/>
            <person name="Pavan W.J."/>
            <person name="Pavesi G."/>
            <person name="Pesole G."/>
            <person name="Petrovsky N."/>
            <person name="Piazza S."/>
            <person name="Reed J."/>
            <person name="Reid J.F."/>
            <person name="Ring B.Z."/>
            <person name="Ringwald M."/>
            <person name="Rost B."/>
            <person name="Ruan Y."/>
            <person name="Salzberg S.L."/>
            <person name="Sandelin A."/>
            <person name="Schneider C."/>
            <person name="Schoenbach C."/>
            <person name="Sekiguchi K."/>
            <person name="Semple C.A."/>
            <person name="Seno S."/>
            <person name="Sessa L."/>
            <person name="Sheng Y."/>
            <person name="Shibata Y."/>
            <person name="Shimada H."/>
            <person name="Shimada K."/>
            <person name="Silva D."/>
            <person name="Sinclair B."/>
            <person name="Sperling S."/>
            <person name="Stupka E."/>
            <person name="Sugiura K."/>
            <person name="Sultana R."/>
            <person name="Takenaka Y."/>
            <person name="Taki K."/>
            <person name="Tammoja K."/>
            <person name="Tan S.L."/>
            <person name="Tang S."/>
            <person name="Taylor M.S."/>
            <person name="Tegner J."/>
            <person name="Teichmann S.A."/>
            <person name="Ueda H.R."/>
            <person name="van Nimwegen E."/>
            <person name="Verardo R."/>
            <person name="Wei C.L."/>
            <person name="Yagi K."/>
            <person name="Yamanishi H."/>
            <person name="Zabarovsky E."/>
            <person name="Zhu S."/>
            <person name="Zimmer A."/>
            <person name="Hide W."/>
            <person name="Bult C."/>
            <person name="Grimmond S.M."/>
            <person name="Teasdale R.D."/>
            <person name="Liu E.T."/>
            <person name="Brusic V."/>
            <person name="Quackenbush J."/>
            <person name="Wahlestedt C."/>
            <person name="Mattick J.S."/>
            <person name="Hume D.A."/>
            <person name="Kai C."/>
            <person name="Sasaki D."/>
            <person name="Tomaru Y."/>
            <person name="Fukuda S."/>
            <person name="Kanamori-Katayama M."/>
            <person name="Suzuki M."/>
            <person name="Aoki J."/>
            <person name="Arakawa T."/>
            <person name="Iida J."/>
            <person name="Imamura K."/>
            <person name="Itoh M."/>
            <person name="Kato T."/>
            <person name="Kawaji H."/>
            <person name="Kawagashira N."/>
            <person name="Kawashima T."/>
            <person name="Kojima M."/>
            <person name="Kondo S."/>
            <person name="Konno H."/>
            <person name="Nakano K."/>
            <person name="Ninomiya N."/>
            <person name="Nishio T."/>
            <person name="Okada M."/>
            <person name="Plessy C."/>
            <person name="Shibata K."/>
            <person name="Shiraki T."/>
            <person name="Suzuki S."/>
            <person name="Tagami M."/>
            <person name="Waki K."/>
            <person name="Watahiki A."/>
            <person name="Okamura-Oho Y."/>
            <person name="Suzuki H."/>
            <person name="Kawai J."/>
            <person name="Hayashizaki Y."/>
        </authorList>
    </citation>
    <scope>NUCLEOTIDE SEQUENCE [LARGE SCALE MRNA]</scope>
    <source>
        <strain>C57BL/6J</strain>
        <strain>NOD</strain>
        <tissue>Eye</tissue>
        <tissue>Spleen</tissue>
        <tissue>Thymus</tissue>
    </source>
</reference>
<reference key="2">
    <citation type="journal article" date="2004" name="Genome Res.">
        <title>The status, quality, and expansion of the NIH full-length cDNA project: the Mammalian Gene Collection (MGC).</title>
        <authorList>
            <consortium name="The MGC Project Team"/>
        </authorList>
    </citation>
    <scope>NUCLEOTIDE SEQUENCE [LARGE SCALE MRNA]</scope>
    <source>
        <strain>C57BL/6J</strain>
        <tissue>Brain</tissue>
    </source>
</reference>
<dbReference type="EMBL" id="AK041667">
    <property type="protein sequence ID" value="BAC31026.1"/>
    <property type="molecule type" value="mRNA"/>
</dbReference>
<dbReference type="EMBL" id="AK050733">
    <property type="protein sequence ID" value="BAC34397.1"/>
    <property type="molecule type" value="mRNA"/>
</dbReference>
<dbReference type="EMBL" id="AK053801">
    <property type="protein sequence ID" value="BAC35532.1"/>
    <property type="molecule type" value="mRNA"/>
</dbReference>
<dbReference type="EMBL" id="AK087531">
    <property type="protein sequence ID" value="BAC39915.1"/>
    <property type="molecule type" value="mRNA"/>
</dbReference>
<dbReference type="EMBL" id="AK172614">
    <property type="protein sequence ID" value="BAE43094.1"/>
    <property type="molecule type" value="mRNA"/>
</dbReference>
<dbReference type="EMBL" id="BC079853">
    <property type="protein sequence ID" value="AAH79853.1"/>
    <property type="molecule type" value="mRNA"/>
</dbReference>
<dbReference type="EMBL" id="BC082321">
    <property type="protein sequence ID" value="AAH82321.1"/>
    <property type="molecule type" value="mRNA"/>
</dbReference>
<dbReference type="CCDS" id="CCDS19839.1"/>
<dbReference type="RefSeq" id="NP_766314.3">
    <property type="nucleotide sequence ID" value="NM_172726.4"/>
</dbReference>
<dbReference type="SMR" id="Q8BGA7"/>
<dbReference type="FunCoup" id="Q8BGA7">
    <property type="interactions" value="1583"/>
</dbReference>
<dbReference type="STRING" id="10090.ENSMUSP00000041800"/>
<dbReference type="iPTMnet" id="Q8BGA7"/>
<dbReference type="PhosphoSitePlus" id="Q8BGA7"/>
<dbReference type="PaxDb" id="10090-ENSMUSP00000041800"/>
<dbReference type="PeptideAtlas" id="Q8BGA7"/>
<dbReference type="Pumba" id="Q8BGA7"/>
<dbReference type="Antibodypedia" id="64371">
    <property type="antibodies" value="39 antibodies from 11 providers"/>
</dbReference>
<dbReference type="DNASU" id="231868"/>
<dbReference type="Ensembl" id="ENSMUST00000046418.3">
    <property type="protein sequence ID" value="ENSMUSP00000041800.3"/>
    <property type="gene ID" value="ENSMUSG00000039244.11"/>
</dbReference>
<dbReference type="GeneID" id="231868"/>
<dbReference type="KEGG" id="mmu:231868"/>
<dbReference type="UCSC" id="uc009ajy.2">
    <property type="organism name" value="mouse"/>
</dbReference>
<dbReference type="AGR" id="MGI:2442621"/>
<dbReference type="CTD" id="79034"/>
<dbReference type="MGI" id="MGI:2442621">
    <property type="gene designation" value="Ints15"/>
</dbReference>
<dbReference type="VEuPathDB" id="HostDB:ENSMUSG00000039244"/>
<dbReference type="eggNOG" id="ENOG502QW9D">
    <property type="taxonomic scope" value="Eukaryota"/>
</dbReference>
<dbReference type="GeneTree" id="ENSGT00390000011370"/>
<dbReference type="HOGENOM" id="CLU_045490_1_0_1"/>
<dbReference type="InParanoid" id="Q8BGA7"/>
<dbReference type="OMA" id="DDGDCHQ"/>
<dbReference type="OrthoDB" id="5861309at2759"/>
<dbReference type="PhylomeDB" id="Q8BGA7"/>
<dbReference type="TreeFam" id="TF324587"/>
<dbReference type="BioGRID-ORCS" id="231868">
    <property type="hits" value="15 hits in 78 CRISPR screens"/>
</dbReference>
<dbReference type="PRO" id="PR:Q8BGA7"/>
<dbReference type="Proteomes" id="UP000000589">
    <property type="component" value="Chromosome 5"/>
</dbReference>
<dbReference type="RNAct" id="Q8BGA7">
    <property type="molecule type" value="protein"/>
</dbReference>
<dbReference type="Bgee" id="ENSMUSG00000039244">
    <property type="expression patterns" value="Expressed in rostral migratory stream and 266 other cell types or tissues"/>
</dbReference>
<dbReference type="GO" id="GO:0005694">
    <property type="term" value="C:chromosome"/>
    <property type="evidence" value="ECO:0000250"/>
    <property type="project" value="UniProtKB"/>
</dbReference>
<dbReference type="GO" id="GO:0160232">
    <property type="term" value="C:INTAC complex"/>
    <property type="evidence" value="ECO:0000250"/>
    <property type="project" value="UniProtKB"/>
</dbReference>
<dbReference type="GO" id="GO:0032039">
    <property type="term" value="C:integrator complex"/>
    <property type="evidence" value="ECO:0000250"/>
    <property type="project" value="UniProtKB"/>
</dbReference>
<dbReference type="GO" id="GO:0005634">
    <property type="term" value="C:nucleus"/>
    <property type="evidence" value="ECO:0000250"/>
    <property type="project" value="UniProtKB"/>
</dbReference>
<dbReference type="GO" id="GO:0007420">
    <property type="term" value="P:brain development"/>
    <property type="evidence" value="ECO:0000315"/>
    <property type="project" value="MGI"/>
</dbReference>
<dbReference type="GO" id="GO:0001654">
    <property type="term" value="P:eye development"/>
    <property type="evidence" value="ECO:0000315"/>
    <property type="project" value="MGI"/>
</dbReference>
<dbReference type="GO" id="GO:0000398">
    <property type="term" value="P:mRNA splicing, via spliceosome"/>
    <property type="evidence" value="ECO:0000315"/>
    <property type="project" value="MGI"/>
</dbReference>
<dbReference type="GO" id="GO:0160240">
    <property type="term" value="P:RNA polymerase II transcription initiation surveillance"/>
    <property type="evidence" value="ECO:0000250"/>
    <property type="project" value="UniProtKB"/>
</dbReference>
<dbReference type="InterPro" id="IPR027844">
    <property type="entry name" value="INTS15"/>
</dbReference>
<dbReference type="PANTHER" id="PTHR14540">
    <property type="entry name" value="INTEGRATOR COMPLEX SUBUNIT 15"/>
    <property type="match status" value="1"/>
</dbReference>
<dbReference type="PANTHER" id="PTHR14540:SF2">
    <property type="entry name" value="INTEGRATOR COMPLEX SUBUNIT 15"/>
    <property type="match status" value="1"/>
</dbReference>
<dbReference type="Pfam" id="PF14964">
    <property type="entry name" value="INTS15"/>
    <property type="match status" value="1"/>
</dbReference>
<gene>
    <name evidence="3" type="primary">Ints15</name>
</gene>
<keyword id="KW-0158">Chromosome</keyword>
<keyword id="KW-0539">Nucleus</keyword>
<keyword id="KW-1185">Reference proteome</keyword>
<evidence type="ECO:0000250" key="1">
    <source>
        <dbReference type="UniProtKB" id="Q96N11"/>
    </source>
</evidence>
<evidence type="ECO:0000305" key="2"/>
<evidence type="ECO:0000312" key="3">
    <source>
        <dbReference type="MGI" id="MGI:2442621"/>
    </source>
</evidence>
<protein>
    <recommendedName>
        <fullName evidence="3">Integrator complex subunit 15</fullName>
    </recommendedName>
</protein>
<proteinExistence type="evidence at transcript level"/>
<feature type="chain" id="PRO_0000089583" description="Integrator complex subunit 15">
    <location>
        <begin position="1"/>
        <end position="448"/>
    </location>
</feature>
<feature type="sequence conflict" description="In Ref. 1; BAC39915." evidence="2" ref="1">
    <original>D</original>
    <variation>E</variation>
    <location>
        <position position="3"/>
    </location>
</feature>
<feature type="sequence conflict" description="In Ref. 1; BAC39915." evidence="2" ref="1">
    <original>D</original>
    <variation>N</variation>
    <location>
        <position position="25"/>
    </location>
</feature>
<accession>Q8BGA7</accession>
<accession>Q3T9D0</accession>
<accession>Q8BN55</accession>